<comment type="function">
    <text evidence="1">A key translational regulator that binds mRNA to regulate translation initiation and/or mRNA stability. Mediates global changes in gene expression, shifting from rapid growth to stress survival by linking envelope stress, the stringent response and the catabolite repression systems. Usually binds in the 5'-UTR; binding at or near the Shine-Dalgarno sequence prevents ribosome-binding, repressing translation, binding elsewhere in the 5'-UTR can activate translation and/or stabilize the mRNA. Its function is antagonized by small RNA(s).</text>
</comment>
<comment type="subunit">
    <text evidence="1">Homodimer; the beta-strands of each monomer intercalate to form a hydrophobic core, while the alpha-helices form wings that extend away from the core.</text>
</comment>
<comment type="subcellular location">
    <subcellularLocation>
        <location evidence="1">Cytoplasm</location>
    </subcellularLocation>
</comment>
<comment type="similarity">
    <text evidence="1">Belongs to the CsrA/RsmA family.</text>
</comment>
<name>CSRA_SALA4</name>
<sequence length="61" mass="6856">MLILTRRVGETLMIGDEVTVTVLGVKGNQVRIGVNAPKEVSVHREEIYQRIQAEKSQQSSY</sequence>
<gene>
    <name evidence="1" type="primary">csrA</name>
    <name type="ordered locus">SeAg_B2945</name>
</gene>
<protein>
    <recommendedName>
        <fullName evidence="1">Translational regulator CsrA</fullName>
    </recommendedName>
    <alternativeName>
        <fullName evidence="1">Carbon storage regulator</fullName>
    </alternativeName>
</protein>
<evidence type="ECO:0000255" key="1">
    <source>
        <dbReference type="HAMAP-Rule" id="MF_00167"/>
    </source>
</evidence>
<feature type="chain" id="PRO_1000097501" description="Translational regulator CsrA">
    <location>
        <begin position="1"/>
        <end position="61"/>
    </location>
</feature>
<keyword id="KW-0010">Activator</keyword>
<keyword id="KW-0963">Cytoplasm</keyword>
<keyword id="KW-0678">Repressor</keyword>
<keyword id="KW-0694">RNA-binding</keyword>
<keyword id="KW-0810">Translation regulation</keyword>
<dbReference type="EMBL" id="CP001138">
    <property type="protein sequence ID" value="ACH51512.1"/>
    <property type="molecule type" value="Genomic_DNA"/>
</dbReference>
<dbReference type="RefSeq" id="WP_000906486.1">
    <property type="nucleotide sequence ID" value="NC_011149.1"/>
</dbReference>
<dbReference type="SMR" id="B5F349"/>
<dbReference type="GeneID" id="98389839"/>
<dbReference type="KEGG" id="sea:SeAg_B2945"/>
<dbReference type="HOGENOM" id="CLU_164837_2_1_6"/>
<dbReference type="Proteomes" id="UP000008819">
    <property type="component" value="Chromosome"/>
</dbReference>
<dbReference type="GO" id="GO:0005829">
    <property type="term" value="C:cytosol"/>
    <property type="evidence" value="ECO:0007669"/>
    <property type="project" value="TreeGrafter"/>
</dbReference>
<dbReference type="GO" id="GO:0048027">
    <property type="term" value="F:mRNA 5'-UTR binding"/>
    <property type="evidence" value="ECO:0007669"/>
    <property type="project" value="UniProtKB-UniRule"/>
</dbReference>
<dbReference type="GO" id="GO:0006402">
    <property type="term" value="P:mRNA catabolic process"/>
    <property type="evidence" value="ECO:0007669"/>
    <property type="project" value="InterPro"/>
</dbReference>
<dbReference type="GO" id="GO:0045947">
    <property type="term" value="P:negative regulation of translational initiation"/>
    <property type="evidence" value="ECO:0007669"/>
    <property type="project" value="UniProtKB-UniRule"/>
</dbReference>
<dbReference type="GO" id="GO:0045948">
    <property type="term" value="P:positive regulation of translational initiation"/>
    <property type="evidence" value="ECO:0007669"/>
    <property type="project" value="UniProtKB-UniRule"/>
</dbReference>
<dbReference type="GO" id="GO:0006109">
    <property type="term" value="P:regulation of carbohydrate metabolic process"/>
    <property type="evidence" value="ECO:0007669"/>
    <property type="project" value="UniProtKB-UniRule"/>
</dbReference>
<dbReference type="FunFam" id="2.60.40.4380:FF:000001">
    <property type="entry name" value="Translational regulator CsrA"/>
    <property type="match status" value="1"/>
</dbReference>
<dbReference type="Gene3D" id="2.60.40.4380">
    <property type="entry name" value="Translational regulator CsrA"/>
    <property type="match status" value="1"/>
</dbReference>
<dbReference type="HAMAP" id="MF_00167">
    <property type="entry name" value="CsrA"/>
    <property type="match status" value="1"/>
</dbReference>
<dbReference type="InterPro" id="IPR003751">
    <property type="entry name" value="CsrA"/>
</dbReference>
<dbReference type="InterPro" id="IPR036107">
    <property type="entry name" value="CsrA_sf"/>
</dbReference>
<dbReference type="NCBIfam" id="TIGR00202">
    <property type="entry name" value="csrA"/>
    <property type="match status" value="1"/>
</dbReference>
<dbReference type="NCBIfam" id="NF002469">
    <property type="entry name" value="PRK01712.1"/>
    <property type="match status" value="1"/>
</dbReference>
<dbReference type="PANTHER" id="PTHR34984">
    <property type="entry name" value="CARBON STORAGE REGULATOR"/>
    <property type="match status" value="1"/>
</dbReference>
<dbReference type="PANTHER" id="PTHR34984:SF1">
    <property type="entry name" value="CARBON STORAGE REGULATOR"/>
    <property type="match status" value="1"/>
</dbReference>
<dbReference type="Pfam" id="PF02599">
    <property type="entry name" value="CsrA"/>
    <property type="match status" value="1"/>
</dbReference>
<dbReference type="SUPFAM" id="SSF117130">
    <property type="entry name" value="CsrA-like"/>
    <property type="match status" value="1"/>
</dbReference>
<accession>B5F349</accession>
<organism>
    <name type="scientific">Salmonella agona (strain SL483)</name>
    <dbReference type="NCBI Taxonomy" id="454166"/>
    <lineage>
        <taxon>Bacteria</taxon>
        <taxon>Pseudomonadati</taxon>
        <taxon>Pseudomonadota</taxon>
        <taxon>Gammaproteobacteria</taxon>
        <taxon>Enterobacterales</taxon>
        <taxon>Enterobacteriaceae</taxon>
        <taxon>Salmonella</taxon>
    </lineage>
</organism>
<reference key="1">
    <citation type="journal article" date="2011" name="J. Bacteriol.">
        <title>Comparative genomics of 28 Salmonella enterica isolates: evidence for CRISPR-mediated adaptive sublineage evolution.</title>
        <authorList>
            <person name="Fricke W.F."/>
            <person name="Mammel M.K."/>
            <person name="McDermott P.F."/>
            <person name="Tartera C."/>
            <person name="White D.G."/>
            <person name="Leclerc J.E."/>
            <person name="Ravel J."/>
            <person name="Cebula T.A."/>
        </authorList>
    </citation>
    <scope>NUCLEOTIDE SEQUENCE [LARGE SCALE GENOMIC DNA]</scope>
    <source>
        <strain>SL483</strain>
    </source>
</reference>
<proteinExistence type="inferred from homology"/>